<accession>P96985</accession>
<protein>
    <recommendedName>
        <fullName evidence="1">Triosephosphate isomerase</fullName>
        <shortName evidence="1">TIM</shortName>
        <shortName evidence="1">TPI</shortName>
        <ecNumber evidence="1">5.3.1.1</ecNumber>
    </recommendedName>
    <alternativeName>
        <fullName evidence="1">Triose-phosphate isomerase</fullName>
    </alternativeName>
</protein>
<gene>
    <name evidence="1" type="primary">tpiA</name>
    <name type="synonym">tpi</name>
</gene>
<dbReference type="EC" id="5.3.1.1" evidence="1"/>
<dbReference type="EMBL" id="U73964">
    <property type="protein sequence ID" value="AAB48823.1"/>
    <property type="molecule type" value="Genomic_DNA"/>
</dbReference>
<dbReference type="SMR" id="P96985"/>
<dbReference type="UniPathway" id="UPA00109">
    <property type="reaction ID" value="UER00189"/>
</dbReference>
<dbReference type="UniPathway" id="UPA00138"/>
<dbReference type="GO" id="GO:0005829">
    <property type="term" value="C:cytosol"/>
    <property type="evidence" value="ECO:0007669"/>
    <property type="project" value="TreeGrafter"/>
</dbReference>
<dbReference type="GO" id="GO:0004807">
    <property type="term" value="F:triose-phosphate isomerase activity"/>
    <property type="evidence" value="ECO:0007669"/>
    <property type="project" value="UniProtKB-EC"/>
</dbReference>
<dbReference type="GO" id="GO:0006094">
    <property type="term" value="P:gluconeogenesis"/>
    <property type="evidence" value="ECO:0007669"/>
    <property type="project" value="UniProtKB-UniPathway"/>
</dbReference>
<dbReference type="GO" id="GO:0046166">
    <property type="term" value="P:glyceraldehyde-3-phosphate biosynthetic process"/>
    <property type="evidence" value="ECO:0007669"/>
    <property type="project" value="TreeGrafter"/>
</dbReference>
<dbReference type="GO" id="GO:0019563">
    <property type="term" value="P:glycerol catabolic process"/>
    <property type="evidence" value="ECO:0007669"/>
    <property type="project" value="TreeGrafter"/>
</dbReference>
<dbReference type="GO" id="GO:0006096">
    <property type="term" value="P:glycolytic process"/>
    <property type="evidence" value="ECO:0007669"/>
    <property type="project" value="UniProtKB-UniPathway"/>
</dbReference>
<dbReference type="CDD" id="cd00311">
    <property type="entry name" value="TIM"/>
    <property type="match status" value="1"/>
</dbReference>
<dbReference type="Gene3D" id="3.20.20.70">
    <property type="entry name" value="Aldolase class I"/>
    <property type="match status" value="1"/>
</dbReference>
<dbReference type="HAMAP" id="MF_00147_B">
    <property type="entry name" value="TIM_B"/>
    <property type="match status" value="1"/>
</dbReference>
<dbReference type="InterPro" id="IPR013785">
    <property type="entry name" value="Aldolase_TIM"/>
</dbReference>
<dbReference type="InterPro" id="IPR035990">
    <property type="entry name" value="TIM_sf"/>
</dbReference>
<dbReference type="InterPro" id="IPR022896">
    <property type="entry name" value="TrioseP_Isoase_bac/euk"/>
</dbReference>
<dbReference type="InterPro" id="IPR000652">
    <property type="entry name" value="Triosephosphate_isomerase"/>
</dbReference>
<dbReference type="InterPro" id="IPR020861">
    <property type="entry name" value="Triosephosphate_isomerase_AS"/>
</dbReference>
<dbReference type="NCBIfam" id="TIGR00419">
    <property type="entry name" value="tim"/>
    <property type="match status" value="1"/>
</dbReference>
<dbReference type="PANTHER" id="PTHR21139">
    <property type="entry name" value="TRIOSEPHOSPHATE ISOMERASE"/>
    <property type="match status" value="1"/>
</dbReference>
<dbReference type="PANTHER" id="PTHR21139:SF42">
    <property type="entry name" value="TRIOSEPHOSPHATE ISOMERASE"/>
    <property type="match status" value="1"/>
</dbReference>
<dbReference type="Pfam" id="PF00121">
    <property type="entry name" value="TIM"/>
    <property type="match status" value="1"/>
</dbReference>
<dbReference type="SUPFAM" id="SSF51351">
    <property type="entry name" value="Triosephosphate isomerase (TIM)"/>
    <property type="match status" value="1"/>
</dbReference>
<dbReference type="PROSITE" id="PS00171">
    <property type="entry name" value="TIM_1"/>
    <property type="match status" value="1"/>
</dbReference>
<dbReference type="PROSITE" id="PS51440">
    <property type="entry name" value="TIM_2"/>
    <property type="match status" value="1"/>
</dbReference>
<name>TPIS2_RHIEC</name>
<evidence type="ECO:0000255" key="1">
    <source>
        <dbReference type="HAMAP-Rule" id="MF_00147"/>
    </source>
</evidence>
<reference key="1">
    <citation type="journal article" date="1997" name="Proc. Natl. Acad. Sci. U.S.A.">
        <title>Evidence that eukaryotic triosephosphate isomerase is of alpha-proteobacterial origin.</title>
        <authorList>
            <person name="Keeling P.J."/>
            <person name="Doolittle W.F."/>
        </authorList>
    </citation>
    <scope>NUCLEOTIDE SEQUENCE [GENOMIC DNA]</scope>
</reference>
<sequence>MNPMQADAKQLLQEFKQLLQENEITEEKCNIGLAPVTLALTSTQAELANAARSVFTVAQDVSRFGNMGAYTGEVSAELLKDSQIEYVLIGHSERREYFAESAAILNAKAQNALNAGLKVIYCVGESLEQRESGQAEVVVLQQICDLASVVTAEQWPHIVIAYEPIWAIGTGKTASPEDAQTMHAKIREGLTQITSHGANMAILYGGSVKAENAVELAACPDINGAL</sequence>
<feature type="chain" id="PRO_0000090273" description="Triosephosphate isomerase">
    <location>
        <begin position="1" status="less than"/>
        <end position="226" status="greater than"/>
    </location>
</feature>
<feature type="active site" description="Electrophile" evidence="1">
    <location>
        <position position="91"/>
    </location>
</feature>
<feature type="active site" description="Proton acceptor" evidence="1">
    <location>
        <position position="163"/>
    </location>
</feature>
<feature type="binding site" evidence="1">
    <location>
        <position position="169"/>
    </location>
    <ligand>
        <name>substrate</name>
    </ligand>
</feature>
<feature type="binding site" evidence="1">
    <location>
        <position position="207"/>
    </location>
    <ligand>
        <name>substrate</name>
    </ligand>
</feature>
<feature type="non-terminal residue">
    <location>
        <position position="1"/>
    </location>
</feature>
<feature type="non-terminal residue">
    <location>
        <position position="226"/>
    </location>
</feature>
<organism>
    <name type="scientific">Rhizobium etli (strain ATCC 51251 / DSM 11541 / JCM 21823 / NBRC 15573 / CFN 42)</name>
    <dbReference type="NCBI Taxonomy" id="347834"/>
    <lineage>
        <taxon>Bacteria</taxon>
        <taxon>Pseudomonadati</taxon>
        <taxon>Pseudomonadota</taxon>
        <taxon>Alphaproteobacteria</taxon>
        <taxon>Hyphomicrobiales</taxon>
        <taxon>Rhizobiaceae</taxon>
        <taxon>Rhizobium/Agrobacterium group</taxon>
        <taxon>Rhizobium</taxon>
    </lineage>
</organism>
<comment type="function">
    <text evidence="1">Involved in the gluconeogenesis. Catalyzes stereospecifically the conversion of dihydroxyacetone phosphate (DHAP) to D-glyceraldehyde-3-phosphate (G3P).</text>
</comment>
<comment type="catalytic activity">
    <reaction evidence="1">
        <text>D-glyceraldehyde 3-phosphate = dihydroxyacetone phosphate</text>
        <dbReference type="Rhea" id="RHEA:18585"/>
        <dbReference type="ChEBI" id="CHEBI:57642"/>
        <dbReference type="ChEBI" id="CHEBI:59776"/>
        <dbReference type="EC" id="5.3.1.1"/>
    </reaction>
</comment>
<comment type="pathway">
    <text evidence="1">Carbohydrate biosynthesis; gluconeogenesis.</text>
</comment>
<comment type="pathway">
    <text evidence="1">Carbohydrate degradation; glycolysis; D-glyceraldehyde 3-phosphate from glycerone phosphate: step 1/1.</text>
</comment>
<comment type="subunit">
    <text evidence="1">Homodimer.</text>
</comment>
<comment type="subcellular location">
    <subcellularLocation>
        <location evidence="1">Cytoplasm</location>
    </subcellularLocation>
</comment>
<comment type="similarity">
    <text evidence="1">Belongs to the triosephosphate isomerase family.</text>
</comment>
<proteinExistence type="inferred from homology"/>
<keyword id="KW-0963">Cytoplasm</keyword>
<keyword id="KW-0312">Gluconeogenesis</keyword>
<keyword id="KW-0324">Glycolysis</keyword>
<keyword id="KW-0413">Isomerase</keyword>